<organism>
    <name type="scientific">Escherichia coli (strain UTI89 / UPEC)</name>
    <dbReference type="NCBI Taxonomy" id="364106"/>
    <lineage>
        <taxon>Bacteria</taxon>
        <taxon>Pseudomonadati</taxon>
        <taxon>Pseudomonadota</taxon>
        <taxon>Gammaproteobacteria</taxon>
        <taxon>Enterobacterales</taxon>
        <taxon>Enterobacteriaceae</taxon>
        <taxon>Escherichia</taxon>
    </lineage>
</organism>
<reference key="1">
    <citation type="journal article" date="2006" name="Proc. Natl. Acad. Sci. U.S.A.">
        <title>Identification of genes subject to positive selection in uropathogenic strains of Escherichia coli: a comparative genomics approach.</title>
        <authorList>
            <person name="Chen S.L."/>
            <person name="Hung C.-S."/>
            <person name="Xu J."/>
            <person name="Reigstad C.S."/>
            <person name="Magrini V."/>
            <person name="Sabo A."/>
            <person name="Blasiar D."/>
            <person name="Bieri T."/>
            <person name="Meyer R.R."/>
            <person name="Ozersky P."/>
            <person name="Armstrong J.R."/>
            <person name="Fulton R.S."/>
            <person name="Latreille J.P."/>
            <person name="Spieth J."/>
            <person name="Hooton T.M."/>
            <person name="Mardis E.R."/>
            <person name="Hultgren S.J."/>
            <person name="Gordon J.I."/>
        </authorList>
    </citation>
    <scope>NUCLEOTIDE SEQUENCE [LARGE SCALE GENOMIC DNA]</scope>
    <source>
        <strain>UTI89 / UPEC</strain>
    </source>
</reference>
<evidence type="ECO:0000255" key="1">
    <source>
        <dbReference type="HAMAP-Rule" id="MF_00176"/>
    </source>
</evidence>
<dbReference type="EC" id="6.1.1.11" evidence="1"/>
<dbReference type="EMBL" id="CP000243">
    <property type="protein sequence ID" value="ABE06393.1"/>
    <property type="molecule type" value="Genomic_DNA"/>
</dbReference>
<dbReference type="RefSeq" id="WP_000886683.1">
    <property type="nucleotide sequence ID" value="NZ_CP064825.1"/>
</dbReference>
<dbReference type="SMR" id="Q1RE21"/>
<dbReference type="GeneID" id="93776527"/>
<dbReference type="KEGG" id="eci:UTI89_C0908"/>
<dbReference type="HOGENOM" id="CLU_023797_1_1_6"/>
<dbReference type="UniPathway" id="UPA00906">
    <property type="reaction ID" value="UER00895"/>
</dbReference>
<dbReference type="Proteomes" id="UP000001952">
    <property type="component" value="Chromosome"/>
</dbReference>
<dbReference type="GO" id="GO:0005737">
    <property type="term" value="C:cytoplasm"/>
    <property type="evidence" value="ECO:0007669"/>
    <property type="project" value="UniProtKB-SubCell"/>
</dbReference>
<dbReference type="GO" id="GO:0005524">
    <property type="term" value="F:ATP binding"/>
    <property type="evidence" value="ECO:0007669"/>
    <property type="project" value="UniProtKB-UniRule"/>
</dbReference>
<dbReference type="GO" id="GO:0004828">
    <property type="term" value="F:serine-tRNA ligase activity"/>
    <property type="evidence" value="ECO:0007669"/>
    <property type="project" value="UniProtKB-UniRule"/>
</dbReference>
<dbReference type="GO" id="GO:0016260">
    <property type="term" value="P:selenocysteine biosynthetic process"/>
    <property type="evidence" value="ECO:0007669"/>
    <property type="project" value="UniProtKB-UniRule"/>
</dbReference>
<dbReference type="GO" id="GO:0006434">
    <property type="term" value="P:seryl-tRNA aminoacylation"/>
    <property type="evidence" value="ECO:0007669"/>
    <property type="project" value="UniProtKB-UniRule"/>
</dbReference>
<dbReference type="CDD" id="cd00770">
    <property type="entry name" value="SerRS_core"/>
    <property type="match status" value="1"/>
</dbReference>
<dbReference type="FunFam" id="1.10.287.40:FF:000001">
    <property type="entry name" value="Serine--tRNA ligase"/>
    <property type="match status" value="1"/>
</dbReference>
<dbReference type="FunFam" id="3.30.930.10:FF:000018">
    <property type="entry name" value="Serine--tRNA ligase"/>
    <property type="match status" value="1"/>
</dbReference>
<dbReference type="Gene3D" id="3.30.930.10">
    <property type="entry name" value="Bira Bifunctional Protein, Domain 2"/>
    <property type="match status" value="1"/>
</dbReference>
<dbReference type="Gene3D" id="1.10.287.40">
    <property type="entry name" value="Serine-tRNA synthetase, tRNA binding domain"/>
    <property type="match status" value="1"/>
</dbReference>
<dbReference type="HAMAP" id="MF_00176">
    <property type="entry name" value="Ser_tRNA_synth_type1"/>
    <property type="match status" value="1"/>
</dbReference>
<dbReference type="InterPro" id="IPR002314">
    <property type="entry name" value="aa-tRNA-synt_IIb"/>
</dbReference>
<dbReference type="InterPro" id="IPR006195">
    <property type="entry name" value="aa-tRNA-synth_II"/>
</dbReference>
<dbReference type="InterPro" id="IPR045864">
    <property type="entry name" value="aa-tRNA-synth_II/BPL/LPL"/>
</dbReference>
<dbReference type="InterPro" id="IPR002317">
    <property type="entry name" value="Ser-tRNA-ligase_type_1"/>
</dbReference>
<dbReference type="InterPro" id="IPR015866">
    <property type="entry name" value="Ser-tRNA-synth_1_N"/>
</dbReference>
<dbReference type="InterPro" id="IPR042103">
    <property type="entry name" value="SerRS_1_N_sf"/>
</dbReference>
<dbReference type="InterPro" id="IPR033729">
    <property type="entry name" value="SerRS_core"/>
</dbReference>
<dbReference type="InterPro" id="IPR010978">
    <property type="entry name" value="tRNA-bd_arm"/>
</dbReference>
<dbReference type="NCBIfam" id="TIGR00414">
    <property type="entry name" value="serS"/>
    <property type="match status" value="1"/>
</dbReference>
<dbReference type="PANTHER" id="PTHR43697:SF1">
    <property type="entry name" value="SERINE--TRNA LIGASE"/>
    <property type="match status" value="1"/>
</dbReference>
<dbReference type="PANTHER" id="PTHR43697">
    <property type="entry name" value="SERYL-TRNA SYNTHETASE"/>
    <property type="match status" value="1"/>
</dbReference>
<dbReference type="Pfam" id="PF02403">
    <property type="entry name" value="Seryl_tRNA_N"/>
    <property type="match status" value="1"/>
</dbReference>
<dbReference type="Pfam" id="PF00587">
    <property type="entry name" value="tRNA-synt_2b"/>
    <property type="match status" value="1"/>
</dbReference>
<dbReference type="PIRSF" id="PIRSF001529">
    <property type="entry name" value="Ser-tRNA-synth_IIa"/>
    <property type="match status" value="1"/>
</dbReference>
<dbReference type="PRINTS" id="PR00981">
    <property type="entry name" value="TRNASYNTHSER"/>
</dbReference>
<dbReference type="SUPFAM" id="SSF55681">
    <property type="entry name" value="Class II aaRS and biotin synthetases"/>
    <property type="match status" value="1"/>
</dbReference>
<dbReference type="SUPFAM" id="SSF46589">
    <property type="entry name" value="tRNA-binding arm"/>
    <property type="match status" value="1"/>
</dbReference>
<dbReference type="PROSITE" id="PS50862">
    <property type="entry name" value="AA_TRNA_LIGASE_II"/>
    <property type="match status" value="1"/>
</dbReference>
<sequence>MLDPNLLRNEPDAVAEKLARRGFKLDVDKLGALEERRKVLQVKTENLQAERNSRSKSIGQAKARGEDIEPLRLEVNKLGEELDAAKAELDALQAEIRDIALTIPNLPADEVPVGKDENDNVEVSRWGTPREFDFEVRDHVTLGEMHSGLDFAAAVKLTGSRFVVMKGQIARMHRALSQFMLDLHTEQHGYSENYVPYLVNQDTLYGTGQLPKFAGDLFHTRPLEEEADTSNYALIPTAEVPLTNLVRGEIIDEDDLPIKMTAHTPCFRSEAGSYGRDTRGLIRMHQFDKVEMVQIVRPEDSMAALEEMTGHAEKVLQLLGLPYRKIILCTGDMGFGACKTYDLEVWIPAQNTYREISSCSNVWDFQARRMQARCRSKSDKKTRLVHTLNGSGLAVGRTLVAVMENYQQADGRIEVPEVLRPYMNGLEYIG</sequence>
<accession>Q1RE21</accession>
<name>SYS_ECOUT</name>
<keyword id="KW-0030">Aminoacyl-tRNA synthetase</keyword>
<keyword id="KW-0067">ATP-binding</keyword>
<keyword id="KW-0963">Cytoplasm</keyword>
<keyword id="KW-0436">Ligase</keyword>
<keyword id="KW-0547">Nucleotide-binding</keyword>
<keyword id="KW-0648">Protein biosynthesis</keyword>
<proteinExistence type="inferred from homology"/>
<comment type="function">
    <text evidence="1">Catalyzes the attachment of serine to tRNA(Ser). Is also able to aminoacylate tRNA(Sec) with serine, to form the misacylated tRNA L-seryl-tRNA(Sec), which will be further converted into selenocysteinyl-tRNA(Sec).</text>
</comment>
<comment type="catalytic activity">
    <reaction evidence="1">
        <text>tRNA(Ser) + L-serine + ATP = L-seryl-tRNA(Ser) + AMP + diphosphate + H(+)</text>
        <dbReference type="Rhea" id="RHEA:12292"/>
        <dbReference type="Rhea" id="RHEA-COMP:9669"/>
        <dbReference type="Rhea" id="RHEA-COMP:9703"/>
        <dbReference type="ChEBI" id="CHEBI:15378"/>
        <dbReference type="ChEBI" id="CHEBI:30616"/>
        <dbReference type="ChEBI" id="CHEBI:33019"/>
        <dbReference type="ChEBI" id="CHEBI:33384"/>
        <dbReference type="ChEBI" id="CHEBI:78442"/>
        <dbReference type="ChEBI" id="CHEBI:78533"/>
        <dbReference type="ChEBI" id="CHEBI:456215"/>
        <dbReference type="EC" id="6.1.1.11"/>
    </reaction>
</comment>
<comment type="catalytic activity">
    <reaction evidence="1">
        <text>tRNA(Sec) + L-serine + ATP = L-seryl-tRNA(Sec) + AMP + diphosphate + H(+)</text>
        <dbReference type="Rhea" id="RHEA:42580"/>
        <dbReference type="Rhea" id="RHEA-COMP:9742"/>
        <dbReference type="Rhea" id="RHEA-COMP:10128"/>
        <dbReference type="ChEBI" id="CHEBI:15378"/>
        <dbReference type="ChEBI" id="CHEBI:30616"/>
        <dbReference type="ChEBI" id="CHEBI:33019"/>
        <dbReference type="ChEBI" id="CHEBI:33384"/>
        <dbReference type="ChEBI" id="CHEBI:78442"/>
        <dbReference type="ChEBI" id="CHEBI:78533"/>
        <dbReference type="ChEBI" id="CHEBI:456215"/>
        <dbReference type="EC" id="6.1.1.11"/>
    </reaction>
</comment>
<comment type="pathway">
    <text evidence="1">Aminoacyl-tRNA biosynthesis; selenocysteinyl-tRNA(Sec) biosynthesis; L-seryl-tRNA(Sec) from L-serine and tRNA(Sec): step 1/1.</text>
</comment>
<comment type="subunit">
    <text evidence="1">Homodimer. The tRNA molecule binds across the dimer.</text>
</comment>
<comment type="subcellular location">
    <subcellularLocation>
        <location evidence="1">Cytoplasm</location>
    </subcellularLocation>
</comment>
<comment type="domain">
    <text evidence="1">Consists of two distinct domains, a catalytic core and a N-terminal extension that is involved in tRNA binding.</text>
</comment>
<comment type="similarity">
    <text evidence="1">Belongs to the class-II aminoacyl-tRNA synthetase family. Type-1 seryl-tRNA synthetase subfamily.</text>
</comment>
<gene>
    <name evidence="1" type="primary">serS</name>
    <name type="ordered locus">UTI89_C0908</name>
</gene>
<protein>
    <recommendedName>
        <fullName evidence="1">Serine--tRNA ligase</fullName>
        <ecNumber evidence="1">6.1.1.11</ecNumber>
    </recommendedName>
    <alternativeName>
        <fullName evidence="1">Seryl-tRNA synthetase</fullName>
        <shortName evidence="1">SerRS</shortName>
    </alternativeName>
    <alternativeName>
        <fullName evidence="1">Seryl-tRNA(Ser/Sec) synthetase</fullName>
    </alternativeName>
</protein>
<feature type="chain" id="PRO_1000019675" description="Serine--tRNA ligase">
    <location>
        <begin position="1"/>
        <end position="430"/>
    </location>
</feature>
<feature type="binding site" evidence="1">
    <location>
        <begin position="237"/>
        <end position="239"/>
    </location>
    <ligand>
        <name>L-serine</name>
        <dbReference type="ChEBI" id="CHEBI:33384"/>
    </ligand>
</feature>
<feature type="binding site" evidence="1">
    <location>
        <begin position="268"/>
        <end position="270"/>
    </location>
    <ligand>
        <name>ATP</name>
        <dbReference type="ChEBI" id="CHEBI:30616"/>
    </ligand>
</feature>
<feature type="binding site" evidence="1">
    <location>
        <position position="291"/>
    </location>
    <ligand>
        <name>L-serine</name>
        <dbReference type="ChEBI" id="CHEBI:33384"/>
    </ligand>
</feature>
<feature type="binding site" evidence="1">
    <location>
        <begin position="355"/>
        <end position="358"/>
    </location>
    <ligand>
        <name>ATP</name>
        <dbReference type="ChEBI" id="CHEBI:30616"/>
    </ligand>
</feature>
<feature type="binding site" evidence="1">
    <location>
        <position position="391"/>
    </location>
    <ligand>
        <name>L-serine</name>
        <dbReference type="ChEBI" id="CHEBI:33384"/>
    </ligand>
</feature>